<accession>Q12TB5</accession>
<organism>
    <name type="scientific">Shewanella denitrificans (strain OS217 / ATCC BAA-1090 / DSM 15013)</name>
    <dbReference type="NCBI Taxonomy" id="318161"/>
    <lineage>
        <taxon>Bacteria</taxon>
        <taxon>Pseudomonadati</taxon>
        <taxon>Pseudomonadota</taxon>
        <taxon>Gammaproteobacteria</taxon>
        <taxon>Alteromonadales</taxon>
        <taxon>Shewanellaceae</taxon>
        <taxon>Shewanella</taxon>
    </lineage>
</organism>
<dbReference type="EC" id="2.3.1.16" evidence="1"/>
<dbReference type="EMBL" id="CP000302">
    <property type="protein sequence ID" value="ABE53311.1"/>
    <property type="molecule type" value="Genomic_DNA"/>
</dbReference>
<dbReference type="RefSeq" id="WP_011494480.1">
    <property type="nucleotide sequence ID" value="NC_007954.1"/>
</dbReference>
<dbReference type="SMR" id="Q12TB5"/>
<dbReference type="STRING" id="318161.Sden_0014"/>
<dbReference type="KEGG" id="sdn:Sden_0014"/>
<dbReference type="eggNOG" id="COG0183">
    <property type="taxonomic scope" value="Bacteria"/>
</dbReference>
<dbReference type="HOGENOM" id="CLU_031026_2_3_6"/>
<dbReference type="OrthoDB" id="8951704at2"/>
<dbReference type="UniPathway" id="UPA00659"/>
<dbReference type="Proteomes" id="UP000001982">
    <property type="component" value="Chromosome"/>
</dbReference>
<dbReference type="GO" id="GO:0005737">
    <property type="term" value="C:cytoplasm"/>
    <property type="evidence" value="ECO:0007669"/>
    <property type="project" value="UniProtKB-SubCell"/>
</dbReference>
<dbReference type="GO" id="GO:0003988">
    <property type="term" value="F:acetyl-CoA C-acyltransferase activity"/>
    <property type="evidence" value="ECO:0007669"/>
    <property type="project" value="UniProtKB-UniRule"/>
</dbReference>
<dbReference type="GO" id="GO:0006635">
    <property type="term" value="P:fatty acid beta-oxidation"/>
    <property type="evidence" value="ECO:0007669"/>
    <property type="project" value="UniProtKB-UniRule"/>
</dbReference>
<dbReference type="GO" id="GO:0010124">
    <property type="term" value="P:phenylacetate catabolic process"/>
    <property type="evidence" value="ECO:0007669"/>
    <property type="project" value="TreeGrafter"/>
</dbReference>
<dbReference type="CDD" id="cd00751">
    <property type="entry name" value="thiolase"/>
    <property type="match status" value="1"/>
</dbReference>
<dbReference type="FunFam" id="3.40.47.10:FF:000010">
    <property type="entry name" value="Acetyl-CoA acetyltransferase (Thiolase)"/>
    <property type="match status" value="1"/>
</dbReference>
<dbReference type="Gene3D" id="3.40.47.10">
    <property type="match status" value="2"/>
</dbReference>
<dbReference type="HAMAP" id="MF_01620">
    <property type="entry name" value="FadA"/>
    <property type="match status" value="1"/>
</dbReference>
<dbReference type="InterPro" id="IPR012805">
    <property type="entry name" value="FadA"/>
</dbReference>
<dbReference type="InterPro" id="IPR002155">
    <property type="entry name" value="Thiolase"/>
</dbReference>
<dbReference type="InterPro" id="IPR016039">
    <property type="entry name" value="Thiolase-like"/>
</dbReference>
<dbReference type="InterPro" id="IPR050215">
    <property type="entry name" value="Thiolase-like_sf_Thiolase"/>
</dbReference>
<dbReference type="InterPro" id="IPR020615">
    <property type="entry name" value="Thiolase_acyl_enz_int_AS"/>
</dbReference>
<dbReference type="InterPro" id="IPR020610">
    <property type="entry name" value="Thiolase_AS"/>
</dbReference>
<dbReference type="InterPro" id="IPR020617">
    <property type="entry name" value="Thiolase_C"/>
</dbReference>
<dbReference type="InterPro" id="IPR020613">
    <property type="entry name" value="Thiolase_CS"/>
</dbReference>
<dbReference type="InterPro" id="IPR020616">
    <property type="entry name" value="Thiolase_N"/>
</dbReference>
<dbReference type="NCBIfam" id="TIGR01930">
    <property type="entry name" value="AcCoA-C-Actrans"/>
    <property type="match status" value="1"/>
</dbReference>
<dbReference type="NCBIfam" id="TIGR02445">
    <property type="entry name" value="fadA"/>
    <property type="match status" value="1"/>
</dbReference>
<dbReference type="NCBIfam" id="NF006510">
    <property type="entry name" value="PRK08947.1"/>
    <property type="match status" value="1"/>
</dbReference>
<dbReference type="PANTHER" id="PTHR43853:SF11">
    <property type="entry name" value="3-KETOACYL-COA THIOLASE FADA"/>
    <property type="match status" value="1"/>
</dbReference>
<dbReference type="PANTHER" id="PTHR43853">
    <property type="entry name" value="3-KETOACYL-COA THIOLASE, PEROXISOMAL"/>
    <property type="match status" value="1"/>
</dbReference>
<dbReference type="Pfam" id="PF02803">
    <property type="entry name" value="Thiolase_C"/>
    <property type="match status" value="1"/>
</dbReference>
<dbReference type="Pfam" id="PF00108">
    <property type="entry name" value="Thiolase_N"/>
    <property type="match status" value="1"/>
</dbReference>
<dbReference type="PIRSF" id="PIRSF000429">
    <property type="entry name" value="Ac-CoA_Ac_transf"/>
    <property type="match status" value="1"/>
</dbReference>
<dbReference type="SUPFAM" id="SSF53901">
    <property type="entry name" value="Thiolase-like"/>
    <property type="match status" value="2"/>
</dbReference>
<dbReference type="PROSITE" id="PS00098">
    <property type="entry name" value="THIOLASE_1"/>
    <property type="match status" value="1"/>
</dbReference>
<dbReference type="PROSITE" id="PS00737">
    <property type="entry name" value="THIOLASE_2"/>
    <property type="match status" value="1"/>
</dbReference>
<dbReference type="PROSITE" id="PS00099">
    <property type="entry name" value="THIOLASE_3"/>
    <property type="match status" value="1"/>
</dbReference>
<proteinExistence type="inferred from homology"/>
<gene>
    <name evidence="1" type="primary">fadA</name>
    <name type="ordered locus">Sden_0014</name>
</gene>
<sequence length="387" mass="40735">MKQAVIVDCIRTPMGRSKAGVFRNVRAETLSAELMKALLIRNPQLDPSLIEDVIWGCVQQTLEQGFNIARNASLLAGIPKTAGAVTVNRLCGSSMDAIHQAARAIMTGMGDTFIIGGVEHMGHVPMNHGVDFHPGLANRVAKASGMMGLTAEMLGKMHGISREQQDAFAVRSHQRAHAATVEGRFAKEIWAMEGHDANGALIKVMHDEVIRPETTMESLAGLRPVFDPANGTVTAGTSSALSDGASAMLVMEESKARALGLPIRARIRSMAVAGCDAAIMGYGPVPATQKALARAGLTVADLDVIELNEAFAAQSLPCVKDLGLQDVVEEKINLNGGAIALGHPLGCSGARISTTLINLMEEKDATIGLATMCIGLGQGIATVFERV</sequence>
<reference key="1">
    <citation type="submission" date="2006-03" db="EMBL/GenBank/DDBJ databases">
        <title>Complete sequence of Shewanella denitrificans OS217.</title>
        <authorList>
            <consortium name="US DOE Joint Genome Institute"/>
            <person name="Copeland A."/>
            <person name="Lucas S."/>
            <person name="Lapidus A."/>
            <person name="Barry K."/>
            <person name="Detter J.C."/>
            <person name="Glavina del Rio T."/>
            <person name="Hammon N."/>
            <person name="Israni S."/>
            <person name="Dalin E."/>
            <person name="Tice H."/>
            <person name="Pitluck S."/>
            <person name="Brettin T."/>
            <person name="Bruce D."/>
            <person name="Han C."/>
            <person name="Tapia R."/>
            <person name="Gilna P."/>
            <person name="Kiss H."/>
            <person name="Schmutz J."/>
            <person name="Larimer F."/>
            <person name="Land M."/>
            <person name="Hauser L."/>
            <person name="Kyrpides N."/>
            <person name="Lykidis A."/>
            <person name="Richardson P."/>
        </authorList>
    </citation>
    <scope>NUCLEOTIDE SEQUENCE [LARGE SCALE GENOMIC DNA]</scope>
    <source>
        <strain>OS217 / ATCC BAA-1090 / DSM 15013</strain>
    </source>
</reference>
<keyword id="KW-0012">Acyltransferase</keyword>
<keyword id="KW-0963">Cytoplasm</keyword>
<keyword id="KW-0276">Fatty acid metabolism</keyword>
<keyword id="KW-0442">Lipid degradation</keyword>
<keyword id="KW-0443">Lipid metabolism</keyword>
<keyword id="KW-1185">Reference proteome</keyword>
<keyword id="KW-0808">Transferase</keyword>
<name>FADA_SHEDO</name>
<evidence type="ECO:0000255" key="1">
    <source>
        <dbReference type="HAMAP-Rule" id="MF_01620"/>
    </source>
</evidence>
<comment type="function">
    <text evidence="1">Catalyzes the final step of fatty acid oxidation in which acetyl-CoA is released and the CoA ester of a fatty acid two carbons shorter is formed.</text>
</comment>
<comment type="catalytic activity">
    <reaction evidence="1">
        <text>an acyl-CoA + acetyl-CoA = a 3-oxoacyl-CoA + CoA</text>
        <dbReference type="Rhea" id="RHEA:21564"/>
        <dbReference type="ChEBI" id="CHEBI:57287"/>
        <dbReference type="ChEBI" id="CHEBI:57288"/>
        <dbReference type="ChEBI" id="CHEBI:58342"/>
        <dbReference type="ChEBI" id="CHEBI:90726"/>
        <dbReference type="EC" id="2.3.1.16"/>
    </reaction>
</comment>
<comment type="pathway">
    <text evidence="1">Lipid metabolism; fatty acid beta-oxidation.</text>
</comment>
<comment type="subunit">
    <text evidence="1">Heterotetramer of two alpha chains (FadB) and two beta chains (FadA).</text>
</comment>
<comment type="subcellular location">
    <subcellularLocation>
        <location evidence="1">Cytoplasm</location>
    </subcellularLocation>
</comment>
<comment type="similarity">
    <text evidence="1">Belongs to the thiolase-like superfamily. Thiolase family.</text>
</comment>
<protein>
    <recommendedName>
        <fullName evidence="1">3-ketoacyl-CoA thiolase</fullName>
        <ecNumber evidence="1">2.3.1.16</ecNumber>
    </recommendedName>
    <alternativeName>
        <fullName evidence="1">Acetyl-CoA acyltransferase</fullName>
    </alternativeName>
    <alternativeName>
        <fullName evidence="1">Beta-ketothiolase</fullName>
    </alternativeName>
    <alternativeName>
        <fullName evidence="1">Fatty acid oxidation complex subunit beta</fullName>
    </alternativeName>
</protein>
<feature type="chain" id="PRO_0000292901" description="3-ketoacyl-CoA thiolase">
    <location>
        <begin position="1"/>
        <end position="387"/>
    </location>
</feature>
<feature type="active site" description="Acyl-thioester intermediate" evidence="1">
    <location>
        <position position="91"/>
    </location>
</feature>
<feature type="active site" description="Proton acceptor" evidence="1">
    <location>
        <position position="343"/>
    </location>
</feature>
<feature type="active site" description="Proton acceptor" evidence="1">
    <location>
        <position position="373"/>
    </location>
</feature>